<proteinExistence type="inferred from homology"/>
<reference key="1">
    <citation type="journal article" date="2005" name="J. Bacteriol.">
        <title>Whole-genome sequencing of Staphylococcus haemolyticus uncovers the extreme plasticity of its genome and the evolution of human-colonizing staphylococcal species.</title>
        <authorList>
            <person name="Takeuchi F."/>
            <person name="Watanabe S."/>
            <person name="Baba T."/>
            <person name="Yuzawa H."/>
            <person name="Ito T."/>
            <person name="Morimoto Y."/>
            <person name="Kuroda M."/>
            <person name="Cui L."/>
            <person name="Takahashi M."/>
            <person name="Ankai A."/>
            <person name="Baba S."/>
            <person name="Fukui S."/>
            <person name="Lee J.C."/>
            <person name="Hiramatsu K."/>
        </authorList>
    </citation>
    <scope>NUCLEOTIDE SEQUENCE [LARGE SCALE GENOMIC DNA]</scope>
    <source>
        <strain>JCSC1435</strain>
    </source>
</reference>
<feature type="chain" id="PRO_0000226416" description="Small ribosomal subunit protein uS12">
    <location>
        <begin position="1"/>
        <end position="137"/>
    </location>
</feature>
<feature type="region of interest" description="Disordered" evidence="3">
    <location>
        <begin position="1"/>
        <end position="57"/>
    </location>
</feature>
<feature type="region of interest" description="Disordered" evidence="3">
    <location>
        <begin position="118"/>
        <end position="137"/>
    </location>
</feature>
<feature type="modified residue" description="3-methylthioaspartic acid" evidence="1">
    <location>
        <position position="102"/>
    </location>
</feature>
<evidence type="ECO:0000250" key="1"/>
<evidence type="ECO:0000255" key="2">
    <source>
        <dbReference type="HAMAP-Rule" id="MF_00403"/>
    </source>
</evidence>
<evidence type="ECO:0000256" key="3">
    <source>
        <dbReference type="SAM" id="MobiDB-lite"/>
    </source>
</evidence>
<evidence type="ECO:0000305" key="4"/>
<sequence>MPTINQLVRKPRQSKSKKSDSPVLNRGFNSKKKQFTNLNSPQKRGVCTRVGTMTPRKPNSALRKYARVRLSNNIEINAYIPGIGHNLQEHSVVLVRGGRVKDLPGVRYHIVRGALDTSGVDGRRQGRSLYGTKKPKN</sequence>
<protein>
    <recommendedName>
        <fullName evidence="2">Small ribosomal subunit protein uS12</fullName>
    </recommendedName>
    <alternativeName>
        <fullName evidence="4">30S ribosomal protein S12</fullName>
    </alternativeName>
</protein>
<accession>Q4L3K6</accession>
<name>RS12_STAHJ</name>
<comment type="function">
    <text evidence="2">With S4 and S5 plays an important role in translational accuracy.</text>
</comment>
<comment type="function">
    <text evidence="2">Interacts with and stabilizes bases of the 16S rRNA that are involved in tRNA selection in the A site and with the mRNA backbone. Located at the interface of the 30S and 50S subunits, it traverses the body of the 30S subunit contacting proteins on the other side and probably holding the rRNA structure together. The combined cluster of proteins S8, S12 and S17 appears to hold together the shoulder and platform of the 30S subunit.</text>
</comment>
<comment type="subunit">
    <text evidence="2">Part of the 30S ribosomal subunit. Contacts proteins S8 and S17. May interact with IF1 in the 30S initiation complex.</text>
</comment>
<comment type="similarity">
    <text evidence="2">Belongs to the universal ribosomal protein uS12 family.</text>
</comment>
<dbReference type="EMBL" id="AP006716">
    <property type="protein sequence ID" value="BAE05771.1"/>
    <property type="molecule type" value="Genomic_DNA"/>
</dbReference>
<dbReference type="RefSeq" id="WP_011276715.1">
    <property type="nucleotide sequence ID" value="NC_007168.1"/>
</dbReference>
<dbReference type="SMR" id="Q4L3K6"/>
<dbReference type="KEGG" id="sha:SH2462"/>
<dbReference type="eggNOG" id="COG0048">
    <property type="taxonomic scope" value="Bacteria"/>
</dbReference>
<dbReference type="HOGENOM" id="CLU_104295_1_1_9"/>
<dbReference type="OrthoDB" id="9802366at2"/>
<dbReference type="Proteomes" id="UP000000543">
    <property type="component" value="Chromosome"/>
</dbReference>
<dbReference type="GO" id="GO:0015935">
    <property type="term" value="C:small ribosomal subunit"/>
    <property type="evidence" value="ECO:0007669"/>
    <property type="project" value="InterPro"/>
</dbReference>
<dbReference type="GO" id="GO:0019843">
    <property type="term" value="F:rRNA binding"/>
    <property type="evidence" value="ECO:0007669"/>
    <property type="project" value="UniProtKB-UniRule"/>
</dbReference>
<dbReference type="GO" id="GO:0003735">
    <property type="term" value="F:structural constituent of ribosome"/>
    <property type="evidence" value="ECO:0007669"/>
    <property type="project" value="InterPro"/>
</dbReference>
<dbReference type="GO" id="GO:0000049">
    <property type="term" value="F:tRNA binding"/>
    <property type="evidence" value="ECO:0007669"/>
    <property type="project" value="UniProtKB-UniRule"/>
</dbReference>
<dbReference type="GO" id="GO:0006412">
    <property type="term" value="P:translation"/>
    <property type="evidence" value="ECO:0007669"/>
    <property type="project" value="UniProtKB-UniRule"/>
</dbReference>
<dbReference type="CDD" id="cd03368">
    <property type="entry name" value="Ribosomal_S12"/>
    <property type="match status" value="1"/>
</dbReference>
<dbReference type="FunFam" id="2.40.50.140:FF:000001">
    <property type="entry name" value="30S ribosomal protein S12"/>
    <property type="match status" value="1"/>
</dbReference>
<dbReference type="Gene3D" id="2.40.50.140">
    <property type="entry name" value="Nucleic acid-binding proteins"/>
    <property type="match status" value="1"/>
</dbReference>
<dbReference type="HAMAP" id="MF_00403_B">
    <property type="entry name" value="Ribosomal_uS12_B"/>
    <property type="match status" value="1"/>
</dbReference>
<dbReference type="InterPro" id="IPR012340">
    <property type="entry name" value="NA-bd_OB-fold"/>
</dbReference>
<dbReference type="InterPro" id="IPR006032">
    <property type="entry name" value="Ribosomal_uS12"/>
</dbReference>
<dbReference type="InterPro" id="IPR005679">
    <property type="entry name" value="Ribosomal_uS12_bac"/>
</dbReference>
<dbReference type="NCBIfam" id="TIGR00981">
    <property type="entry name" value="rpsL_bact"/>
    <property type="match status" value="1"/>
</dbReference>
<dbReference type="PANTHER" id="PTHR11652">
    <property type="entry name" value="30S RIBOSOMAL PROTEIN S12 FAMILY MEMBER"/>
    <property type="match status" value="1"/>
</dbReference>
<dbReference type="Pfam" id="PF00164">
    <property type="entry name" value="Ribosom_S12_S23"/>
    <property type="match status" value="1"/>
</dbReference>
<dbReference type="PIRSF" id="PIRSF002133">
    <property type="entry name" value="Ribosomal_S12/S23"/>
    <property type="match status" value="1"/>
</dbReference>
<dbReference type="PRINTS" id="PR01034">
    <property type="entry name" value="RIBOSOMALS12"/>
</dbReference>
<dbReference type="SUPFAM" id="SSF50249">
    <property type="entry name" value="Nucleic acid-binding proteins"/>
    <property type="match status" value="1"/>
</dbReference>
<dbReference type="PROSITE" id="PS00055">
    <property type="entry name" value="RIBOSOMAL_S12"/>
    <property type="match status" value="1"/>
</dbReference>
<gene>
    <name evidence="2" type="primary">rpsL</name>
    <name type="ordered locus">SH2462</name>
</gene>
<keyword id="KW-0488">Methylation</keyword>
<keyword id="KW-0687">Ribonucleoprotein</keyword>
<keyword id="KW-0689">Ribosomal protein</keyword>
<keyword id="KW-0694">RNA-binding</keyword>
<keyword id="KW-0699">rRNA-binding</keyword>
<keyword id="KW-0820">tRNA-binding</keyword>
<organism>
    <name type="scientific">Staphylococcus haemolyticus (strain JCSC1435)</name>
    <dbReference type="NCBI Taxonomy" id="279808"/>
    <lineage>
        <taxon>Bacteria</taxon>
        <taxon>Bacillati</taxon>
        <taxon>Bacillota</taxon>
        <taxon>Bacilli</taxon>
        <taxon>Bacillales</taxon>
        <taxon>Staphylococcaceae</taxon>
        <taxon>Staphylococcus</taxon>
    </lineage>
</organism>